<reference key="1">
    <citation type="journal article" date="2001" name="Nature">
        <title>Genome sequence and gene compaction of the eukaryote parasite Encephalitozoon cuniculi.</title>
        <authorList>
            <person name="Katinka M.D."/>
            <person name="Duprat S."/>
            <person name="Cornillot E."/>
            <person name="Metenier G."/>
            <person name="Thomarat F."/>
            <person name="Prensier G."/>
            <person name="Barbe V."/>
            <person name="Peyretaillade E."/>
            <person name="Brottier P."/>
            <person name="Wincker P."/>
            <person name="Delbac F."/>
            <person name="El Alaoui H."/>
            <person name="Peyret P."/>
            <person name="Saurin W."/>
            <person name="Gouy M."/>
            <person name="Weissenbach J."/>
            <person name="Vivares C.P."/>
        </authorList>
    </citation>
    <scope>NUCLEOTIDE SEQUENCE [LARGE SCALE GENOMIC DNA]</scope>
    <source>
        <strain>GB-M1</strain>
    </source>
</reference>
<reference key="2">
    <citation type="journal article" date="2009" name="BMC Genomics">
        <title>Identification of transcriptional signals in Encephalitozoon cuniculi widespread among Microsporidia phylum: support for accurate structural genome annotation.</title>
        <authorList>
            <person name="Peyretaillade E."/>
            <person name="Goncalves O."/>
            <person name="Terrat S."/>
            <person name="Dugat-Bony E."/>
            <person name="Wincker P."/>
            <person name="Cornman R.S."/>
            <person name="Evans J.D."/>
            <person name="Delbac F."/>
            <person name="Peyret P."/>
        </authorList>
    </citation>
    <scope>GENOME REANNOTATION</scope>
    <source>
        <strain>GB-M1</strain>
    </source>
</reference>
<comment type="catalytic activity">
    <reaction>
        <text>tRNA(Asn) + L-asparagine + ATP = L-asparaginyl-tRNA(Asn) + AMP + diphosphate + H(+)</text>
        <dbReference type="Rhea" id="RHEA:11180"/>
        <dbReference type="Rhea" id="RHEA-COMP:9659"/>
        <dbReference type="Rhea" id="RHEA-COMP:9674"/>
        <dbReference type="ChEBI" id="CHEBI:15378"/>
        <dbReference type="ChEBI" id="CHEBI:30616"/>
        <dbReference type="ChEBI" id="CHEBI:33019"/>
        <dbReference type="ChEBI" id="CHEBI:58048"/>
        <dbReference type="ChEBI" id="CHEBI:78442"/>
        <dbReference type="ChEBI" id="CHEBI:78515"/>
        <dbReference type="ChEBI" id="CHEBI:456215"/>
        <dbReference type="EC" id="6.1.1.22"/>
    </reaction>
</comment>
<comment type="subcellular location">
    <subcellularLocation>
        <location evidence="1">Cytoplasm</location>
    </subcellularLocation>
</comment>
<comment type="similarity">
    <text evidence="2">Belongs to the class-II aminoacyl-tRNA synthetase family.</text>
</comment>
<evidence type="ECO:0000250" key="1"/>
<evidence type="ECO:0000305" key="2"/>
<keyword id="KW-0030">Aminoacyl-tRNA synthetase</keyword>
<keyword id="KW-0067">ATP-binding</keyword>
<keyword id="KW-0963">Cytoplasm</keyword>
<keyword id="KW-0436">Ligase</keyword>
<keyword id="KW-0547">Nucleotide-binding</keyword>
<keyword id="KW-0648">Protein biosynthesis</keyword>
<keyword id="KW-1185">Reference proteome</keyword>
<proteinExistence type="inferred from homology"/>
<sequence>MSEKVEKEIGEQITKLDLSEYRSIELSKLSKENIGQKIRTFGWVANVRSQSTITFIELYAHYRTVKCVYQKKMHLTMCTSMTVYGTVSKNFGKKDAHEFEIQVEGVEIYNGAIAPSFPLNEDSSVNAILTNGHLGLRTKKRQLFLKARGHLLKIIRDFYFEGEYTEVTPPTMVQTQVEGGSTLFKLDYYGEDAYLTQSSQLYLETVVPASHRAYCIMPSYRAEKSRTRRHLSEYTHVEAEMADIDLDGLISSIEALVSYSMRRFYEEMKSDILSVFPEFEFHKVPRTPFKRIKYSEAIELLKSKGYKKEDNTDFELGDDIPDAAERYLVEVVGDGCPVFLTHFLVGHKPFYMRKDENDKGLTESTDLLFPGIGEILGGSMRQDTYEDLIEGFRRENINIDPYYWYLDMARFGPCKHGGYGLGFERFLMGLMRYESVDEATLYPRKVSRCQP</sequence>
<dbReference type="EC" id="6.1.1.22"/>
<dbReference type="EMBL" id="AL590451">
    <property type="protein sequence ID" value="CAD27140.2"/>
    <property type="molecule type" value="Genomic_DNA"/>
</dbReference>
<dbReference type="RefSeq" id="NP_001402421.1">
    <property type="nucleotide sequence ID" value="NM_001415485.1"/>
</dbReference>
<dbReference type="RefSeq" id="XP_955721.1">
    <property type="nucleotide sequence ID" value="XM_950628.1"/>
</dbReference>
<dbReference type="SMR" id="Q8SQK8"/>
<dbReference type="FunCoup" id="Q8SQK8">
    <property type="interactions" value="206"/>
</dbReference>
<dbReference type="STRING" id="284813.Q8SQK8"/>
<dbReference type="GeneID" id="860507"/>
<dbReference type="VEuPathDB" id="MicrosporidiaDB:ECU09_1680"/>
<dbReference type="HOGENOM" id="CLU_004553_2_10_1"/>
<dbReference type="InParanoid" id="Q8SQK8"/>
<dbReference type="OrthoDB" id="1931232at2759"/>
<dbReference type="Proteomes" id="UP000000819">
    <property type="component" value="Chromosome IX"/>
</dbReference>
<dbReference type="GO" id="GO:0005737">
    <property type="term" value="C:cytoplasm"/>
    <property type="evidence" value="ECO:0007669"/>
    <property type="project" value="UniProtKB-SubCell"/>
</dbReference>
<dbReference type="GO" id="GO:0004816">
    <property type="term" value="F:asparagine-tRNA ligase activity"/>
    <property type="evidence" value="ECO:0007669"/>
    <property type="project" value="UniProtKB-EC"/>
</dbReference>
<dbReference type="GO" id="GO:0005524">
    <property type="term" value="F:ATP binding"/>
    <property type="evidence" value="ECO:0007669"/>
    <property type="project" value="UniProtKB-KW"/>
</dbReference>
<dbReference type="GO" id="GO:0006421">
    <property type="term" value="P:asparaginyl-tRNA aminoacylation"/>
    <property type="evidence" value="ECO:0007669"/>
    <property type="project" value="InterPro"/>
</dbReference>
<dbReference type="Gene3D" id="3.30.930.10">
    <property type="entry name" value="Bira Bifunctional Protein, Domain 2"/>
    <property type="match status" value="1"/>
</dbReference>
<dbReference type="Gene3D" id="2.40.50.140">
    <property type="entry name" value="Nucleic acid-binding proteins"/>
    <property type="match status" value="1"/>
</dbReference>
<dbReference type="InterPro" id="IPR004364">
    <property type="entry name" value="Aa-tRNA-synt_II"/>
</dbReference>
<dbReference type="InterPro" id="IPR006195">
    <property type="entry name" value="aa-tRNA-synth_II"/>
</dbReference>
<dbReference type="InterPro" id="IPR045864">
    <property type="entry name" value="aa-tRNA-synth_II/BPL/LPL"/>
</dbReference>
<dbReference type="InterPro" id="IPR004522">
    <property type="entry name" value="Asn-tRNA-ligase"/>
</dbReference>
<dbReference type="InterPro" id="IPR002312">
    <property type="entry name" value="Asp/Asn-tRNA-synth_IIb"/>
</dbReference>
<dbReference type="InterPro" id="IPR012340">
    <property type="entry name" value="NA-bd_OB-fold"/>
</dbReference>
<dbReference type="NCBIfam" id="TIGR00457">
    <property type="entry name" value="asnS"/>
    <property type="match status" value="1"/>
</dbReference>
<dbReference type="PANTHER" id="PTHR22594:SF16">
    <property type="entry name" value="ASPARAGINE--TRNA LIGASE, CYTOPLASMIC"/>
    <property type="match status" value="1"/>
</dbReference>
<dbReference type="PANTHER" id="PTHR22594">
    <property type="entry name" value="ASPARTYL/LYSYL-TRNA SYNTHETASE"/>
    <property type="match status" value="1"/>
</dbReference>
<dbReference type="Pfam" id="PF00152">
    <property type="entry name" value="tRNA-synt_2"/>
    <property type="match status" value="1"/>
</dbReference>
<dbReference type="PRINTS" id="PR01042">
    <property type="entry name" value="TRNASYNTHASP"/>
</dbReference>
<dbReference type="SUPFAM" id="SSF55681">
    <property type="entry name" value="Class II aaRS and biotin synthetases"/>
    <property type="match status" value="1"/>
</dbReference>
<dbReference type="SUPFAM" id="SSF50249">
    <property type="entry name" value="Nucleic acid-binding proteins"/>
    <property type="match status" value="1"/>
</dbReference>
<dbReference type="PROSITE" id="PS50862">
    <property type="entry name" value="AA_TRNA_LIGASE_II"/>
    <property type="match status" value="1"/>
</dbReference>
<feature type="chain" id="PRO_0000388388" description="Probable asparagine--tRNA ligase, cytoplasmic">
    <location>
        <begin position="1"/>
        <end position="451"/>
    </location>
</feature>
<protein>
    <recommendedName>
        <fullName>Probable asparagine--tRNA ligase, cytoplasmic</fullName>
        <ecNumber>6.1.1.22</ecNumber>
    </recommendedName>
    <alternativeName>
        <fullName>Asparaginyl-tRNA synthetase</fullName>
        <shortName>AsnRS</shortName>
    </alternativeName>
</protein>
<gene>
    <name type="ordered locus">ECU09_1680</name>
</gene>
<accession>Q8SQK8</accession>
<name>SYNC_ENCCU</name>
<organism>
    <name type="scientific">Encephalitozoon cuniculi (strain GB-M1)</name>
    <name type="common">Microsporidian parasite</name>
    <dbReference type="NCBI Taxonomy" id="284813"/>
    <lineage>
        <taxon>Eukaryota</taxon>
        <taxon>Fungi</taxon>
        <taxon>Fungi incertae sedis</taxon>
        <taxon>Microsporidia</taxon>
        <taxon>Unikaryonidae</taxon>
        <taxon>Encephalitozoon</taxon>
    </lineage>
</organism>